<evidence type="ECO:0000250" key="1"/>
<evidence type="ECO:0000305" key="2"/>
<sequence length="87" mass="10396">MVKKAFISVISQEENRGSVEFQVVSFTNKIRRLTSHLEFHRKDFLSQRGLRKILGKRQRLLSYLSKKDKVRYTELISQLDIRELTTR</sequence>
<proteinExistence type="inferred from homology"/>
<keyword id="KW-0150">Chloroplast</keyword>
<keyword id="KW-0934">Plastid</keyword>
<keyword id="KW-0687">Ribonucleoprotein</keyword>
<keyword id="KW-0689">Ribosomal protein</keyword>
<reference key="1">
    <citation type="journal article" date="2008" name="Nucleic Acids Res.">
        <title>The complete nucleotide sequences of the five genetically distinct plastid genomes of Oenothera, subsection Oenothera: I. Sequence evaluation and plastome evolution.</title>
        <authorList>
            <person name="Greiner S."/>
            <person name="Wang X."/>
            <person name="Rauwolf U."/>
            <person name="Silber M.V."/>
            <person name="Mayer K."/>
            <person name="Meurer J."/>
            <person name="Haberer G."/>
            <person name="Herrmann R.G."/>
        </authorList>
    </citation>
    <scope>NUCLEOTIDE SEQUENCE [LARGE SCALE GENOMIC DNA]</scope>
    <source>
        <strain>cv. Suaveolens Grado</strain>
    </source>
</reference>
<comment type="subunit">
    <text evidence="1">Part of the 30S ribosomal subunit.</text>
</comment>
<comment type="subcellular location">
    <subcellularLocation>
        <location>Plastid</location>
        <location>Chloroplast</location>
    </subcellularLocation>
</comment>
<comment type="similarity">
    <text evidence="2">Belongs to the universal ribosomal protein uS15 family.</text>
</comment>
<feature type="chain" id="PRO_0000354271" description="Small ribosomal subunit protein uS15c">
    <location>
        <begin position="1"/>
        <end position="87"/>
    </location>
</feature>
<dbReference type="EMBL" id="EU262889">
    <property type="protein sequence ID" value="ABW98928.1"/>
    <property type="molecule type" value="Genomic_DNA"/>
</dbReference>
<dbReference type="RefSeq" id="YP_001687423.1">
    <property type="nucleotide sequence ID" value="NC_010361.1"/>
</dbReference>
<dbReference type="SMR" id="B0Z516"/>
<dbReference type="GeneID" id="5951996"/>
<dbReference type="GO" id="GO:0009507">
    <property type="term" value="C:chloroplast"/>
    <property type="evidence" value="ECO:0007669"/>
    <property type="project" value="UniProtKB-SubCell"/>
</dbReference>
<dbReference type="GO" id="GO:1990904">
    <property type="term" value="C:ribonucleoprotein complex"/>
    <property type="evidence" value="ECO:0007669"/>
    <property type="project" value="UniProtKB-KW"/>
</dbReference>
<dbReference type="GO" id="GO:0005840">
    <property type="term" value="C:ribosome"/>
    <property type="evidence" value="ECO:0007669"/>
    <property type="project" value="UniProtKB-KW"/>
</dbReference>
<dbReference type="GO" id="GO:0003735">
    <property type="term" value="F:structural constituent of ribosome"/>
    <property type="evidence" value="ECO:0007669"/>
    <property type="project" value="InterPro"/>
</dbReference>
<dbReference type="GO" id="GO:0006412">
    <property type="term" value="P:translation"/>
    <property type="evidence" value="ECO:0007669"/>
    <property type="project" value="UniProtKB-UniRule"/>
</dbReference>
<dbReference type="CDD" id="cd00353">
    <property type="entry name" value="Ribosomal_S15p_S13e"/>
    <property type="match status" value="1"/>
</dbReference>
<dbReference type="Gene3D" id="1.10.287.10">
    <property type="entry name" value="S15/NS1, RNA-binding"/>
    <property type="match status" value="1"/>
</dbReference>
<dbReference type="HAMAP" id="MF_01343_B">
    <property type="entry name" value="Ribosomal_uS15_B"/>
    <property type="match status" value="1"/>
</dbReference>
<dbReference type="InterPro" id="IPR000589">
    <property type="entry name" value="Ribosomal_uS15"/>
</dbReference>
<dbReference type="InterPro" id="IPR005290">
    <property type="entry name" value="Ribosomal_uS15_bac-type"/>
</dbReference>
<dbReference type="InterPro" id="IPR009068">
    <property type="entry name" value="uS15_NS1_RNA-bd_sf"/>
</dbReference>
<dbReference type="NCBIfam" id="TIGR00952">
    <property type="entry name" value="S15_bact"/>
    <property type="match status" value="1"/>
</dbReference>
<dbReference type="PANTHER" id="PTHR23321">
    <property type="entry name" value="RIBOSOMAL PROTEIN S15, BACTERIAL AND ORGANELLAR"/>
    <property type="match status" value="1"/>
</dbReference>
<dbReference type="PANTHER" id="PTHR23321:SF26">
    <property type="entry name" value="SMALL RIBOSOMAL SUBUNIT PROTEIN US15M"/>
    <property type="match status" value="1"/>
</dbReference>
<dbReference type="Pfam" id="PF00312">
    <property type="entry name" value="Ribosomal_S15"/>
    <property type="match status" value="1"/>
</dbReference>
<dbReference type="SMART" id="SM01387">
    <property type="entry name" value="Ribosomal_S15"/>
    <property type="match status" value="1"/>
</dbReference>
<dbReference type="SUPFAM" id="SSF47060">
    <property type="entry name" value="S15/NS1 RNA-binding domain"/>
    <property type="match status" value="1"/>
</dbReference>
<dbReference type="PROSITE" id="PS00362">
    <property type="entry name" value="RIBOSOMAL_S15"/>
    <property type="match status" value="1"/>
</dbReference>
<gene>
    <name type="primary">rps15</name>
</gene>
<name>RR15_OENBI</name>
<protein>
    <recommendedName>
        <fullName evidence="2">Small ribosomal subunit protein uS15c</fullName>
    </recommendedName>
    <alternativeName>
        <fullName>30S ribosomal protein S15, chloroplastic</fullName>
    </alternativeName>
</protein>
<geneLocation type="chloroplast"/>
<accession>B0Z516</accession>
<organism>
    <name type="scientific">Oenothera biennis</name>
    <name type="common">German evening primrose</name>
    <name type="synonym">Onagra biennis</name>
    <dbReference type="NCBI Taxonomy" id="3942"/>
    <lineage>
        <taxon>Eukaryota</taxon>
        <taxon>Viridiplantae</taxon>
        <taxon>Streptophyta</taxon>
        <taxon>Embryophyta</taxon>
        <taxon>Tracheophyta</taxon>
        <taxon>Spermatophyta</taxon>
        <taxon>Magnoliopsida</taxon>
        <taxon>eudicotyledons</taxon>
        <taxon>Gunneridae</taxon>
        <taxon>Pentapetalae</taxon>
        <taxon>rosids</taxon>
        <taxon>malvids</taxon>
        <taxon>Myrtales</taxon>
        <taxon>Onagraceae</taxon>
        <taxon>Onagroideae</taxon>
        <taxon>Onagreae</taxon>
        <taxon>Oenothera</taxon>
    </lineage>
</organism>